<protein>
    <recommendedName>
        <fullName evidence="1">Large ribosomal subunit protein uL18</fullName>
    </recommendedName>
    <alternativeName>
        <fullName evidence="2">50S ribosomal protein L18</fullName>
    </alternativeName>
</protein>
<reference key="1">
    <citation type="journal article" date="2009" name="Appl. Environ. Microbiol.">
        <title>Metabolic versatility and indigenous origin of the archaeon Thermococcus sibiricus, isolated from a siberian oil reservoir, as revealed by genome analysis.</title>
        <authorList>
            <person name="Mardanov A.V."/>
            <person name="Ravin N.V."/>
            <person name="Svetlitchnyi V.A."/>
            <person name="Beletsky A.V."/>
            <person name="Miroshnichenko M.L."/>
            <person name="Bonch-Osmolovskaya E.A."/>
            <person name="Skryabin K.G."/>
        </authorList>
    </citation>
    <scope>NUCLEOTIDE SEQUENCE [LARGE SCALE GENOMIC DNA]</scope>
    <source>
        <strain>DSM 12597 / MM 739</strain>
    </source>
</reference>
<accession>C6A179</accession>
<keyword id="KW-1185">Reference proteome</keyword>
<keyword id="KW-0687">Ribonucleoprotein</keyword>
<keyword id="KW-0689">Ribosomal protein</keyword>
<keyword id="KW-0694">RNA-binding</keyword>
<keyword id="KW-0699">rRNA-binding</keyword>
<feature type="chain" id="PRO_1000214692" description="Large ribosomal subunit protein uL18">
    <location>
        <begin position="1"/>
        <end position="200"/>
    </location>
</feature>
<organism>
    <name type="scientific">Thermococcus sibiricus (strain DSM 12597 / MM 739)</name>
    <dbReference type="NCBI Taxonomy" id="604354"/>
    <lineage>
        <taxon>Archaea</taxon>
        <taxon>Methanobacteriati</taxon>
        <taxon>Methanobacteriota</taxon>
        <taxon>Thermococci</taxon>
        <taxon>Thermococcales</taxon>
        <taxon>Thermococcaceae</taxon>
        <taxon>Thermococcus</taxon>
    </lineage>
</organism>
<evidence type="ECO:0000255" key="1">
    <source>
        <dbReference type="HAMAP-Rule" id="MF_01337"/>
    </source>
</evidence>
<evidence type="ECO:0000305" key="2"/>
<sequence>MAHGPRYRVPFRRRREGKTNYHKRLALLKSGKPRLVVRKTLNHHVAQIVLYAPEGDKTVVSAHTRELMRDFGWKGHGGNTPSAYLLGLLIGYKALEKGIEEAILDIGLHPPTKGSSIFAVLKGAVDAGLNVPHSEEIYPGEERINGKHIAEYAKMLKEDDENYKKQFGGYLVKGLEPEKLPEHFEEVKARIIEKFEKVRA</sequence>
<gene>
    <name evidence="1" type="primary">rpl18</name>
    <name type="ordered locus">TSIB_0308</name>
</gene>
<name>RL18_THESM</name>
<comment type="function">
    <text evidence="1">This is one of the proteins that bind and probably mediate the attachment of the 5S RNA into the large ribosomal subunit, where it forms part of the central protuberance.</text>
</comment>
<comment type="subunit">
    <text evidence="1">Part of the 50S ribosomal subunit. Contacts the 5S and 23S rRNAs.</text>
</comment>
<comment type="similarity">
    <text evidence="1">Belongs to the universal ribosomal protein uL18 family.</text>
</comment>
<proteinExistence type="inferred from homology"/>
<dbReference type="EMBL" id="CP001463">
    <property type="protein sequence ID" value="ACS89374.1"/>
    <property type="molecule type" value="Genomic_DNA"/>
</dbReference>
<dbReference type="RefSeq" id="WP_015848594.1">
    <property type="nucleotide sequence ID" value="NC_012883.1"/>
</dbReference>
<dbReference type="SMR" id="C6A179"/>
<dbReference type="STRING" id="604354.TSIB_0308"/>
<dbReference type="GeneID" id="8095281"/>
<dbReference type="KEGG" id="tsi:TSIB_0308"/>
<dbReference type="eggNOG" id="arCOG04088">
    <property type="taxonomic scope" value="Archaea"/>
</dbReference>
<dbReference type="HOGENOM" id="CLU_056222_2_0_2"/>
<dbReference type="OrthoDB" id="8644at2157"/>
<dbReference type="Proteomes" id="UP000009079">
    <property type="component" value="Chromosome"/>
</dbReference>
<dbReference type="GO" id="GO:0022625">
    <property type="term" value="C:cytosolic large ribosomal subunit"/>
    <property type="evidence" value="ECO:0007669"/>
    <property type="project" value="TreeGrafter"/>
</dbReference>
<dbReference type="GO" id="GO:0008097">
    <property type="term" value="F:5S rRNA binding"/>
    <property type="evidence" value="ECO:0007669"/>
    <property type="project" value="InterPro"/>
</dbReference>
<dbReference type="GO" id="GO:0003735">
    <property type="term" value="F:structural constituent of ribosome"/>
    <property type="evidence" value="ECO:0007669"/>
    <property type="project" value="InterPro"/>
</dbReference>
<dbReference type="GO" id="GO:0000027">
    <property type="term" value="P:ribosomal large subunit assembly"/>
    <property type="evidence" value="ECO:0007669"/>
    <property type="project" value="TreeGrafter"/>
</dbReference>
<dbReference type="GO" id="GO:0006412">
    <property type="term" value="P:translation"/>
    <property type="evidence" value="ECO:0007669"/>
    <property type="project" value="UniProtKB-UniRule"/>
</dbReference>
<dbReference type="CDD" id="cd00432">
    <property type="entry name" value="Ribosomal_L18_L5e"/>
    <property type="match status" value="1"/>
</dbReference>
<dbReference type="FunFam" id="3.30.420.100:FF:000008">
    <property type="entry name" value="50S ribosomal protein L18"/>
    <property type="match status" value="1"/>
</dbReference>
<dbReference type="Gene3D" id="3.30.420.100">
    <property type="match status" value="1"/>
</dbReference>
<dbReference type="HAMAP" id="MF_01337_A">
    <property type="entry name" value="Ribosomal_uL18_A"/>
    <property type="match status" value="1"/>
</dbReference>
<dbReference type="InterPro" id="IPR005485">
    <property type="entry name" value="Rbsml_uL18_euk"/>
</dbReference>
<dbReference type="NCBIfam" id="NF006342">
    <property type="entry name" value="PRK08569.1"/>
    <property type="match status" value="1"/>
</dbReference>
<dbReference type="PANTHER" id="PTHR23410:SF12">
    <property type="entry name" value="LARGE RIBOSOMAL SUBUNIT PROTEIN UL18"/>
    <property type="match status" value="1"/>
</dbReference>
<dbReference type="PANTHER" id="PTHR23410">
    <property type="entry name" value="RIBOSOMAL PROTEIN L5-RELATED"/>
    <property type="match status" value="1"/>
</dbReference>
<dbReference type="Pfam" id="PF17144">
    <property type="entry name" value="Ribosomal_L5e"/>
    <property type="match status" value="2"/>
</dbReference>
<dbReference type="PRINTS" id="PR00058">
    <property type="entry name" value="RIBOSOMALL5"/>
</dbReference>
<dbReference type="SUPFAM" id="SSF53137">
    <property type="entry name" value="Translational machinery components"/>
    <property type="match status" value="1"/>
</dbReference>